<proteinExistence type="inferred from homology"/>
<gene>
    <name evidence="1" type="primary">nrdR</name>
    <name type="ordered locus">swp_1338</name>
</gene>
<keyword id="KW-0067">ATP-binding</keyword>
<keyword id="KW-0238">DNA-binding</keyword>
<keyword id="KW-0479">Metal-binding</keyword>
<keyword id="KW-0547">Nucleotide-binding</keyword>
<keyword id="KW-0678">Repressor</keyword>
<keyword id="KW-0804">Transcription</keyword>
<keyword id="KW-0805">Transcription regulation</keyword>
<keyword id="KW-0862">Zinc</keyword>
<keyword id="KW-0863">Zinc-finger</keyword>
<name>NRDR_SHEPW</name>
<reference key="1">
    <citation type="journal article" date="2008" name="PLoS ONE">
        <title>Environmental adaptation: genomic analysis of the piezotolerant and psychrotolerant deep-sea iron reducing bacterium Shewanella piezotolerans WP3.</title>
        <authorList>
            <person name="Wang F."/>
            <person name="Wang J."/>
            <person name="Jian H."/>
            <person name="Zhang B."/>
            <person name="Li S."/>
            <person name="Wang F."/>
            <person name="Zeng X."/>
            <person name="Gao L."/>
            <person name="Bartlett D.H."/>
            <person name="Yu J."/>
            <person name="Hu S."/>
            <person name="Xiao X."/>
        </authorList>
    </citation>
    <scope>NUCLEOTIDE SEQUENCE [LARGE SCALE GENOMIC DNA]</scope>
    <source>
        <strain>WP3 / JCM 13877</strain>
    </source>
</reference>
<evidence type="ECO:0000255" key="1">
    <source>
        <dbReference type="HAMAP-Rule" id="MF_00440"/>
    </source>
</evidence>
<sequence length="149" mass="17086">MHCPFCSATDTKVIDSRLVADGHQVRRRRECVQCHERYTTFEGAELVMPRVVKQDGSRQPFDEEKLRGGMLRAVEKRPVSMDQIEQSLTKIKSTLRATGEREVKSEMIGNLMMDQLVNLDKVAYIRFASVYRAFEDVSEFGEAIANLQK</sequence>
<comment type="function">
    <text evidence="1">Negatively regulates transcription of bacterial ribonucleotide reductase nrd genes and operons by binding to NrdR-boxes.</text>
</comment>
<comment type="cofactor">
    <cofactor evidence="1">
        <name>Zn(2+)</name>
        <dbReference type="ChEBI" id="CHEBI:29105"/>
    </cofactor>
    <text evidence="1">Binds 1 zinc ion.</text>
</comment>
<comment type="similarity">
    <text evidence="1">Belongs to the NrdR family.</text>
</comment>
<organism>
    <name type="scientific">Shewanella piezotolerans (strain WP3 / JCM 13877)</name>
    <dbReference type="NCBI Taxonomy" id="225849"/>
    <lineage>
        <taxon>Bacteria</taxon>
        <taxon>Pseudomonadati</taxon>
        <taxon>Pseudomonadota</taxon>
        <taxon>Gammaproteobacteria</taxon>
        <taxon>Alteromonadales</taxon>
        <taxon>Shewanellaceae</taxon>
        <taxon>Shewanella</taxon>
    </lineage>
</organism>
<protein>
    <recommendedName>
        <fullName evidence="1">Transcriptional repressor NrdR</fullName>
    </recommendedName>
</protein>
<dbReference type="EMBL" id="CP000472">
    <property type="protein sequence ID" value="ACJ28125.1"/>
    <property type="molecule type" value="Genomic_DNA"/>
</dbReference>
<dbReference type="RefSeq" id="WP_020911503.1">
    <property type="nucleotide sequence ID" value="NC_011566.1"/>
</dbReference>
<dbReference type="SMR" id="B8CJM8"/>
<dbReference type="STRING" id="225849.swp_1338"/>
<dbReference type="KEGG" id="swp:swp_1338"/>
<dbReference type="eggNOG" id="COG1327">
    <property type="taxonomic scope" value="Bacteria"/>
</dbReference>
<dbReference type="HOGENOM" id="CLU_108412_0_0_6"/>
<dbReference type="OrthoDB" id="9807461at2"/>
<dbReference type="Proteomes" id="UP000000753">
    <property type="component" value="Chromosome"/>
</dbReference>
<dbReference type="GO" id="GO:0005524">
    <property type="term" value="F:ATP binding"/>
    <property type="evidence" value="ECO:0007669"/>
    <property type="project" value="UniProtKB-KW"/>
</dbReference>
<dbReference type="GO" id="GO:0003677">
    <property type="term" value="F:DNA binding"/>
    <property type="evidence" value="ECO:0007669"/>
    <property type="project" value="UniProtKB-KW"/>
</dbReference>
<dbReference type="GO" id="GO:0008270">
    <property type="term" value="F:zinc ion binding"/>
    <property type="evidence" value="ECO:0007669"/>
    <property type="project" value="UniProtKB-UniRule"/>
</dbReference>
<dbReference type="GO" id="GO:0045892">
    <property type="term" value="P:negative regulation of DNA-templated transcription"/>
    <property type="evidence" value="ECO:0007669"/>
    <property type="project" value="UniProtKB-UniRule"/>
</dbReference>
<dbReference type="HAMAP" id="MF_00440">
    <property type="entry name" value="NrdR"/>
    <property type="match status" value="1"/>
</dbReference>
<dbReference type="InterPro" id="IPR005144">
    <property type="entry name" value="ATP-cone_dom"/>
</dbReference>
<dbReference type="InterPro" id="IPR055173">
    <property type="entry name" value="NrdR-like_N"/>
</dbReference>
<dbReference type="InterPro" id="IPR003796">
    <property type="entry name" value="RNR_NrdR-like"/>
</dbReference>
<dbReference type="NCBIfam" id="TIGR00244">
    <property type="entry name" value="transcriptional regulator NrdR"/>
    <property type="match status" value="1"/>
</dbReference>
<dbReference type="PANTHER" id="PTHR30455">
    <property type="entry name" value="TRANSCRIPTIONAL REPRESSOR NRDR"/>
    <property type="match status" value="1"/>
</dbReference>
<dbReference type="PANTHER" id="PTHR30455:SF2">
    <property type="entry name" value="TRANSCRIPTIONAL REPRESSOR NRDR"/>
    <property type="match status" value="1"/>
</dbReference>
<dbReference type="Pfam" id="PF03477">
    <property type="entry name" value="ATP-cone"/>
    <property type="match status" value="1"/>
</dbReference>
<dbReference type="Pfam" id="PF22811">
    <property type="entry name" value="Zn_ribbon_NrdR"/>
    <property type="match status" value="1"/>
</dbReference>
<dbReference type="PROSITE" id="PS51161">
    <property type="entry name" value="ATP_CONE"/>
    <property type="match status" value="1"/>
</dbReference>
<accession>B8CJM8</accession>
<feature type="chain" id="PRO_1000124548" description="Transcriptional repressor NrdR">
    <location>
        <begin position="1"/>
        <end position="149"/>
    </location>
</feature>
<feature type="domain" description="ATP-cone" evidence="1">
    <location>
        <begin position="49"/>
        <end position="139"/>
    </location>
</feature>
<feature type="zinc finger region" evidence="1">
    <location>
        <begin position="3"/>
        <end position="34"/>
    </location>
</feature>